<evidence type="ECO:0000256" key="1">
    <source>
        <dbReference type="SAM" id="MobiDB-lite"/>
    </source>
</evidence>
<evidence type="ECO:0000305" key="2"/>
<evidence type="ECO:0007744" key="3">
    <source>
    </source>
</evidence>
<dbReference type="EMBL" id="AK020847">
    <property type="protein sequence ID" value="BAB32227.3"/>
    <property type="molecule type" value="mRNA"/>
</dbReference>
<dbReference type="EMBL" id="AK169814">
    <property type="protein sequence ID" value="BAE41386.1"/>
    <property type="status" value="ALT_INIT"/>
    <property type="molecule type" value="mRNA"/>
</dbReference>
<dbReference type="EMBL" id="BC027203">
    <property type="protein sequence ID" value="AAH27203.1"/>
    <property type="molecule type" value="mRNA"/>
</dbReference>
<dbReference type="EMBL" id="BC031894">
    <property type="protein sequence ID" value="AAH31894.1"/>
    <property type="molecule type" value="mRNA"/>
</dbReference>
<dbReference type="CCDS" id="CCDS18434.1"/>
<dbReference type="RefSeq" id="NP_084261.1">
    <property type="nucleotide sequence ID" value="NM_029985.2"/>
</dbReference>
<dbReference type="BioGRID" id="218940">
    <property type="interactions" value="1"/>
</dbReference>
<dbReference type="FunCoup" id="Q8R2U7">
    <property type="interactions" value="111"/>
</dbReference>
<dbReference type="IntAct" id="Q8R2U7">
    <property type="interactions" value="1"/>
</dbReference>
<dbReference type="STRING" id="10090.ENSMUSP00000030360"/>
<dbReference type="iPTMnet" id="Q8R2U7"/>
<dbReference type="PhosphoSitePlus" id="Q8R2U7"/>
<dbReference type="jPOST" id="Q8R2U7"/>
<dbReference type="PaxDb" id="10090-ENSMUSP00000030360"/>
<dbReference type="PeptideAtlas" id="Q8R2U7"/>
<dbReference type="ProteomicsDB" id="287269"/>
<dbReference type="Pumba" id="Q8R2U7"/>
<dbReference type="Antibodypedia" id="46891">
    <property type="antibodies" value="119 antibodies from 21 providers"/>
</dbReference>
<dbReference type="DNASU" id="77809"/>
<dbReference type="Ensembl" id="ENSMUST00000030360.11">
    <property type="protein sequence ID" value="ENSMUSP00000030360.5"/>
    <property type="gene ID" value="ENSMUSG00000028617.11"/>
</dbReference>
<dbReference type="GeneID" id="77809"/>
<dbReference type="KEGG" id="mmu:77809"/>
<dbReference type="UCSC" id="uc008tzm.1">
    <property type="organism name" value="mouse"/>
</dbReference>
<dbReference type="AGR" id="MGI:1925059"/>
<dbReference type="CTD" id="115353"/>
<dbReference type="MGI" id="MGI:1925059">
    <property type="gene designation" value="Lrrc42"/>
</dbReference>
<dbReference type="VEuPathDB" id="HostDB:ENSMUSG00000028617"/>
<dbReference type="eggNOG" id="ENOG502QQJZ">
    <property type="taxonomic scope" value="Eukaryota"/>
</dbReference>
<dbReference type="GeneTree" id="ENSGT00390000002727"/>
<dbReference type="HOGENOM" id="CLU_053705_0_0_1"/>
<dbReference type="InParanoid" id="Q8R2U7"/>
<dbReference type="OMA" id="FYGKTHR"/>
<dbReference type="OrthoDB" id="120976at2759"/>
<dbReference type="PhylomeDB" id="Q8R2U7"/>
<dbReference type="TreeFam" id="TF331102"/>
<dbReference type="BioGRID-ORCS" id="77809">
    <property type="hits" value="1 hit in 79 CRISPR screens"/>
</dbReference>
<dbReference type="ChiTaRS" id="Lrrc42">
    <property type="organism name" value="mouse"/>
</dbReference>
<dbReference type="PRO" id="PR:Q8R2U7"/>
<dbReference type="Proteomes" id="UP000000589">
    <property type="component" value="Chromosome 4"/>
</dbReference>
<dbReference type="RNAct" id="Q8R2U7">
    <property type="molecule type" value="protein"/>
</dbReference>
<dbReference type="Bgee" id="ENSMUSG00000028617">
    <property type="expression patterns" value="Expressed in ear vesicle and 264 other cell types or tissues"/>
</dbReference>
<dbReference type="ExpressionAtlas" id="Q8R2U7">
    <property type="expression patterns" value="baseline and differential"/>
</dbReference>
<dbReference type="Gene3D" id="3.80.10.10">
    <property type="entry name" value="Ribonuclease Inhibitor"/>
    <property type="match status" value="1"/>
</dbReference>
<dbReference type="InterPro" id="IPR001611">
    <property type="entry name" value="Leu-rich_rpt"/>
</dbReference>
<dbReference type="InterPro" id="IPR032675">
    <property type="entry name" value="LRR_dom_sf"/>
</dbReference>
<dbReference type="InterPro" id="IPR039631">
    <property type="entry name" value="LRRC42"/>
</dbReference>
<dbReference type="PANTHER" id="PTHR31994">
    <property type="entry name" value="LEUCINE-RICH REPEAT-CONTAINING PROTEIN 42"/>
    <property type="match status" value="1"/>
</dbReference>
<dbReference type="PANTHER" id="PTHR31994:SF3">
    <property type="entry name" value="LEUCINE-RICH REPEAT-CONTAINING PROTEIN 42"/>
    <property type="match status" value="1"/>
</dbReference>
<dbReference type="Pfam" id="PF13516">
    <property type="entry name" value="LRR_6"/>
    <property type="match status" value="3"/>
</dbReference>
<dbReference type="SUPFAM" id="SSF52047">
    <property type="entry name" value="RNI-like"/>
    <property type="match status" value="1"/>
</dbReference>
<gene>
    <name type="primary">Lrrc42</name>
</gene>
<keyword id="KW-0433">Leucine-rich repeat</keyword>
<keyword id="KW-0597">Phosphoprotein</keyword>
<keyword id="KW-1185">Reference proteome</keyword>
<keyword id="KW-0677">Repeat</keyword>
<sequence length="421" mass="47949">MAYYLNSEAHLDPGPIYVRENGQLHMVNLALDGVKNSLQKPRPFRLFPKGFSVELCMNREDDTAQKEKTDHFIFTYTREGNLRYSAKSLFSLVLGFISDNVDHIDSLIGFPEQIAEKLFSAAEARQKFTEPGAGLRALQKFTEAYGSLVLCSLCLRNRYLVVAEKLEEIKSFRELTRLDLSCCWLGDEHELLEHLTNEALSSVTQLHLKDNCLSDAGIRKMTAPVRVMKRGLENLALLDLSCNPEITDAGIGYLFSFRKLNCLDISGTGLKDIKAVKDKLRANIGLVHSKVPLKEFDHSNCKTEGWADQIVLQWERVSVEAVRQRKDVEPRKAAQYFYQNRARTEVTRKCPLAETHMNSSGKLQFYREEAPDCHEPLLSQESKKSKKRAFKESEQEQSSPQSAKQKCVCLAVEDWDLLNSY</sequence>
<organism>
    <name type="scientific">Mus musculus</name>
    <name type="common">Mouse</name>
    <dbReference type="NCBI Taxonomy" id="10090"/>
    <lineage>
        <taxon>Eukaryota</taxon>
        <taxon>Metazoa</taxon>
        <taxon>Chordata</taxon>
        <taxon>Craniata</taxon>
        <taxon>Vertebrata</taxon>
        <taxon>Euteleostomi</taxon>
        <taxon>Mammalia</taxon>
        <taxon>Eutheria</taxon>
        <taxon>Euarchontoglires</taxon>
        <taxon>Glires</taxon>
        <taxon>Rodentia</taxon>
        <taxon>Myomorpha</taxon>
        <taxon>Muroidea</taxon>
        <taxon>Muridae</taxon>
        <taxon>Murinae</taxon>
        <taxon>Mus</taxon>
        <taxon>Mus</taxon>
    </lineage>
</organism>
<proteinExistence type="evidence at protein level"/>
<reference key="1">
    <citation type="journal article" date="2005" name="Science">
        <title>The transcriptional landscape of the mammalian genome.</title>
        <authorList>
            <person name="Carninci P."/>
            <person name="Kasukawa T."/>
            <person name="Katayama S."/>
            <person name="Gough J."/>
            <person name="Frith M.C."/>
            <person name="Maeda N."/>
            <person name="Oyama R."/>
            <person name="Ravasi T."/>
            <person name="Lenhard B."/>
            <person name="Wells C."/>
            <person name="Kodzius R."/>
            <person name="Shimokawa K."/>
            <person name="Bajic V.B."/>
            <person name="Brenner S.E."/>
            <person name="Batalov S."/>
            <person name="Forrest A.R."/>
            <person name="Zavolan M."/>
            <person name="Davis M.J."/>
            <person name="Wilming L.G."/>
            <person name="Aidinis V."/>
            <person name="Allen J.E."/>
            <person name="Ambesi-Impiombato A."/>
            <person name="Apweiler R."/>
            <person name="Aturaliya R.N."/>
            <person name="Bailey T.L."/>
            <person name="Bansal M."/>
            <person name="Baxter L."/>
            <person name="Beisel K.W."/>
            <person name="Bersano T."/>
            <person name="Bono H."/>
            <person name="Chalk A.M."/>
            <person name="Chiu K.P."/>
            <person name="Choudhary V."/>
            <person name="Christoffels A."/>
            <person name="Clutterbuck D.R."/>
            <person name="Crowe M.L."/>
            <person name="Dalla E."/>
            <person name="Dalrymple B.P."/>
            <person name="de Bono B."/>
            <person name="Della Gatta G."/>
            <person name="di Bernardo D."/>
            <person name="Down T."/>
            <person name="Engstrom P."/>
            <person name="Fagiolini M."/>
            <person name="Faulkner G."/>
            <person name="Fletcher C.F."/>
            <person name="Fukushima T."/>
            <person name="Furuno M."/>
            <person name="Futaki S."/>
            <person name="Gariboldi M."/>
            <person name="Georgii-Hemming P."/>
            <person name="Gingeras T.R."/>
            <person name="Gojobori T."/>
            <person name="Green R.E."/>
            <person name="Gustincich S."/>
            <person name="Harbers M."/>
            <person name="Hayashi Y."/>
            <person name="Hensch T.K."/>
            <person name="Hirokawa N."/>
            <person name="Hill D."/>
            <person name="Huminiecki L."/>
            <person name="Iacono M."/>
            <person name="Ikeo K."/>
            <person name="Iwama A."/>
            <person name="Ishikawa T."/>
            <person name="Jakt M."/>
            <person name="Kanapin A."/>
            <person name="Katoh M."/>
            <person name="Kawasawa Y."/>
            <person name="Kelso J."/>
            <person name="Kitamura H."/>
            <person name="Kitano H."/>
            <person name="Kollias G."/>
            <person name="Krishnan S.P."/>
            <person name="Kruger A."/>
            <person name="Kummerfeld S.K."/>
            <person name="Kurochkin I.V."/>
            <person name="Lareau L.F."/>
            <person name="Lazarevic D."/>
            <person name="Lipovich L."/>
            <person name="Liu J."/>
            <person name="Liuni S."/>
            <person name="McWilliam S."/>
            <person name="Madan Babu M."/>
            <person name="Madera M."/>
            <person name="Marchionni L."/>
            <person name="Matsuda H."/>
            <person name="Matsuzawa S."/>
            <person name="Miki H."/>
            <person name="Mignone F."/>
            <person name="Miyake S."/>
            <person name="Morris K."/>
            <person name="Mottagui-Tabar S."/>
            <person name="Mulder N."/>
            <person name="Nakano N."/>
            <person name="Nakauchi H."/>
            <person name="Ng P."/>
            <person name="Nilsson R."/>
            <person name="Nishiguchi S."/>
            <person name="Nishikawa S."/>
            <person name="Nori F."/>
            <person name="Ohara O."/>
            <person name="Okazaki Y."/>
            <person name="Orlando V."/>
            <person name="Pang K.C."/>
            <person name="Pavan W.J."/>
            <person name="Pavesi G."/>
            <person name="Pesole G."/>
            <person name="Petrovsky N."/>
            <person name="Piazza S."/>
            <person name="Reed J."/>
            <person name="Reid J.F."/>
            <person name="Ring B.Z."/>
            <person name="Ringwald M."/>
            <person name="Rost B."/>
            <person name="Ruan Y."/>
            <person name="Salzberg S.L."/>
            <person name="Sandelin A."/>
            <person name="Schneider C."/>
            <person name="Schoenbach C."/>
            <person name="Sekiguchi K."/>
            <person name="Semple C.A."/>
            <person name="Seno S."/>
            <person name="Sessa L."/>
            <person name="Sheng Y."/>
            <person name="Shibata Y."/>
            <person name="Shimada H."/>
            <person name="Shimada K."/>
            <person name="Silva D."/>
            <person name="Sinclair B."/>
            <person name="Sperling S."/>
            <person name="Stupka E."/>
            <person name="Sugiura K."/>
            <person name="Sultana R."/>
            <person name="Takenaka Y."/>
            <person name="Taki K."/>
            <person name="Tammoja K."/>
            <person name="Tan S.L."/>
            <person name="Tang S."/>
            <person name="Taylor M.S."/>
            <person name="Tegner J."/>
            <person name="Teichmann S.A."/>
            <person name="Ueda H.R."/>
            <person name="van Nimwegen E."/>
            <person name="Verardo R."/>
            <person name="Wei C.L."/>
            <person name="Yagi K."/>
            <person name="Yamanishi H."/>
            <person name="Zabarovsky E."/>
            <person name="Zhu S."/>
            <person name="Zimmer A."/>
            <person name="Hide W."/>
            <person name="Bult C."/>
            <person name="Grimmond S.M."/>
            <person name="Teasdale R.D."/>
            <person name="Liu E.T."/>
            <person name="Brusic V."/>
            <person name="Quackenbush J."/>
            <person name="Wahlestedt C."/>
            <person name="Mattick J.S."/>
            <person name="Hume D.A."/>
            <person name="Kai C."/>
            <person name="Sasaki D."/>
            <person name="Tomaru Y."/>
            <person name="Fukuda S."/>
            <person name="Kanamori-Katayama M."/>
            <person name="Suzuki M."/>
            <person name="Aoki J."/>
            <person name="Arakawa T."/>
            <person name="Iida J."/>
            <person name="Imamura K."/>
            <person name="Itoh M."/>
            <person name="Kato T."/>
            <person name="Kawaji H."/>
            <person name="Kawagashira N."/>
            <person name="Kawashima T."/>
            <person name="Kojima M."/>
            <person name="Kondo S."/>
            <person name="Konno H."/>
            <person name="Nakano K."/>
            <person name="Ninomiya N."/>
            <person name="Nishio T."/>
            <person name="Okada M."/>
            <person name="Plessy C."/>
            <person name="Shibata K."/>
            <person name="Shiraki T."/>
            <person name="Suzuki S."/>
            <person name="Tagami M."/>
            <person name="Waki K."/>
            <person name="Watahiki A."/>
            <person name="Okamura-Oho Y."/>
            <person name="Suzuki H."/>
            <person name="Kawai J."/>
            <person name="Hayashizaki Y."/>
        </authorList>
    </citation>
    <scope>NUCLEOTIDE SEQUENCE [LARGE SCALE MRNA]</scope>
    <source>
        <strain>C57BL/6J</strain>
        <strain>NOD</strain>
        <tissue>Retina</tissue>
        <tissue>Thymus</tissue>
    </source>
</reference>
<reference key="2">
    <citation type="journal article" date="2004" name="Genome Res.">
        <title>The status, quality, and expansion of the NIH full-length cDNA project: the Mammalian Gene Collection (MGC).</title>
        <authorList>
            <consortium name="The MGC Project Team"/>
        </authorList>
    </citation>
    <scope>NUCLEOTIDE SEQUENCE [LARGE SCALE MRNA]</scope>
    <source>
        <strain>FVB/N</strain>
        <tissue>Eye</tissue>
        <tissue>Mammary tumor</tissue>
    </source>
</reference>
<reference key="3">
    <citation type="journal article" date="2010" name="Cell">
        <title>A tissue-specific atlas of mouse protein phosphorylation and expression.</title>
        <authorList>
            <person name="Huttlin E.L."/>
            <person name="Jedrychowski M.P."/>
            <person name="Elias J.E."/>
            <person name="Goswami T."/>
            <person name="Rad R."/>
            <person name="Beausoleil S.A."/>
            <person name="Villen J."/>
            <person name="Haas W."/>
            <person name="Sowa M.E."/>
            <person name="Gygi S.P."/>
        </authorList>
    </citation>
    <scope>PHOSPHORYLATION [LARGE SCALE ANALYSIS] AT SER-399</scope>
    <scope>IDENTIFICATION BY MASS SPECTROMETRY [LARGE SCALE ANALYSIS]</scope>
    <source>
        <tissue>Testis</tissue>
    </source>
</reference>
<feature type="chain" id="PRO_0000223471" description="Leucine-rich repeat-containing protein 42">
    <location>
        <begin position="1"/>
        <end position="421"/>
    </location>
</feature>
<feature type="repeat" description="LRR 1">
    <location>
        <begin position="149"/>
        <end position="170"/>
    </location>
</feature>
<feature type="repeat" description="LRR 2">
    <location>
        <begin position="174"/>
        <end position="195"/>
    </location>
</feature>
<feature type="repeat" description="LRR 3">
    <location>
        <begin position="202"/>
        <end position="222"/>
    </location>
</feature>
<feature type="repeat" description="LRR 4">
    <location>
        <begin position="234"/>
        <end position="255"/>
    </location>
</feature>
<feature type="repeat" description="LRR 5">
    <location>
        <begin position="259"/>
        <end position="280"/>
    </location>
</feature>
<feature type="region of interest" description="Disordered" evidence="1">
    <location>
        <begin position="376"/>
        <end position="406"/>
    </location>
</feature>
<feature type="compositionally biased region" description="Low complexity" evidence="1">
    <location>
        <begin position="396"/>
        <end position="406"/>
    </location>
</feature>
<feature type="modified residue" description="Phosphoserine" evidence="3">
    <location>
        <position position="399"/>
    </location>
</feature>
<accession>Q8R2U7</accession>
<accession>Q3TE62</accession>
<accession>Q9CTP9</accession>
<comment type="similarity">
    <text evidence="2">Belongs to the LRRC42 family.</text>
</comment>
<comment type="sequence caution" evidence="2">
    <conflict type="erroneous initiation">
        <sequence resource="EMBL-CDS" id="BAE41386"/>
    </conflict>
</comment>
<protein>
    <recommendedName>
        <fullName>Leucine-rich repeat-containing protein 42</fullName>
    </recommendedName>
</protein>
<name>LRC42_MOUSE</name>